<reference key="1">
    <citation type="submission" date="2003-06" db="EMBL/GenBank/DDBJ databases">
        <title>The complete genome sequence of Haemophilus ducreyi.</title>
        <authorList>
            <person name="Munson R.S. Jr."/>
            <person name="Ray W.C."/>
            <person name="Mahairas G."/>
            <person name="Sabo P."/>
            <person name="Mungur R."/>
            <person name="Johnson L."/>
            <person name="Nguyen D."/>
            <person name="Wang J."/>
            <person name="Forst C."/>
            <person name="Hood L."/>
        </authorList>
    </citation>
    <scope>NUCLEOTIDE SEQUENCE [LARGE SCALE GENOMIC DNA]</scope>
    <source>
        <strain>35000HP / ATCC 700724</strain>
    </source>
</reference>
<name>SYQ_HAEDU</name>
<dbReference type="EC" id="6.1.1.18" evidence="1"/>
<dbReference type="EMBL" id="AE017143">
    <property type="protein sequence ID" value="AAP96212.1"/>
    <property type="molecule type" value="Genomic_DNA"/>
</dbReference>
<dbReference type="RefSeq" id="WP_010945261.1">
    <property type="nucleotide sequence ID" value="NC_002940.2"/>
</dbReference>
<dbReference type="SMR" id="Q7VLM3"/>
<dbReference type="STRING" id="233412.HD_1404"/>
<dbReference type="KEGG" id="hdu:HD_1404"/>
<dbReference type="eggNOG" id="COG0008">
    <property type="taxonomic scope" value="Bacteria"/>
</dbReference>
<dbReference type="HOGENOM" id="CLU_001882_2_3_6"/>
<dbReference type="OrthoDB" id="9801560at2"/>
<dbReference type="Proteomes" id="UP000001022">
    <property type="component" value="Chromosome"/>
</dbReference>
<dbReference type="GO" id="GO:0005829">
    <property type="term" value="C:cytosol"/>
    <property type="evidence" value="ECO:0007669"/>
    <property type="project" value="TreeGrafter"/>
</dbReference>
<dbReference type="GO" id="GO:0005524">
    <property type="term" value="F:ATP binding"/>
    <property type="evidence" value="ECO:0007669"/>
    <property type="project" value="UniProtKB-UniRule"/>
</dbReference>
<dbReference type="GO" id="GO:0004819">
    <property type="term" value="F:glutamine-tRNA ligase activity"/>
    <property type="evidence" value="ECO:0007669"/>
    <property type="project" value="UniProtKB-UniRule"/>
</dbReference>
<dbReference type="GO" id="GO:0006425">
    <property type="term" value="P:glutaminyl-tRNA aminoacylation"/>
    <property type="evidence" value="ECO:0007669"/>
    <property type="project" value="InterPro"/>
</dbReference>
<dbReference type="GO" id="GO:0006424">
    <property type="term" value="P:glutamyl-tRNA aminoacylation"/>
    <property type="evidence" value="ECO:0007669"/>
    <property type="project" value="UniProtKB-UniRule"/>
</dbReference>
<dbReference type="CDD" id="cd00807">
    <property type="entry name" value="GlnRS_core"/>
    <property type="match status" value="1"/>
</dbReference>
<dbReference type="FunFam" id="1.10.1160.10:FF:000001">
    <property type="entry name" value="Glutamine--tRNA ligase"/>
    <property type="match status" value="1"/>
</dbReference>
<dbReference type="FunFam" id="2.40.240.10:FF:000001">
    <property type="entry name" value="Glutamine--tRNA ligase"/>
    <property type="match status" value="1"/>
</dbReference>
<dbReference type="FunFam" id="3.90.800.10:FF:000001">
    <property type="entry name" value="Glutamine--tRNA ligase"/>
    <property type="match status" value="1"/>
</dbReference>
<dbReference type="FunFam" id="3.40.50.620:FF:000037">
    <property type="entry name" value="Glutamine--tRNA ligase cytoplasmic"/>
    <property type="match status" value="1"/>
</dbReference>
<dbReference type="Gene3D" id="1.10.1160.10">
    <property type="entry name" value="Glutamyl-trna Synthetase, Domain 2"/>
    <property type="match status" value="1"/>
</dbReference>
<dbReference type="Gene3D" id="3.90.800.10">
    <property type="entry name" value="Glutamyl-tRNA Synthetase, Domain 3"/>
    <property type="match status" value="1"/>
</dbReference>
<dbReference type="Gene3D" id="3.40.50.620">
    <property type="entry name" value="HUPs"/>
    <property type="match status" value="1"/>
</dbReference>
<dbReference type="Gene3D" id="2.40.240.10">
    <property type="entry name" value="Ribosomal Protein L25, Chain P"/>
    <property type="match status" value="2"/>
</dbReference>
<dbReference type="HAMAP" id="MF_00126">
    <property type="entry name" value="Gln_tRNA_synth"/>
    <property type="match status" value="1"/>
</dbReference>
<dbReference type="InterPro" id="IPR001412">
    <property type="entry name" value="aa-tRNA-synth_I_CS"/>
</dbReference>
<dbReference type="InterPro" id="IPR004514">
    <property type="entry name" value="Gln-tRNA-synth"/>
</dbReference>
<dbReference type="InterPro" id="IPR050132">
    <property type="entry name" value="Gln/Glu-tRNA_Ligase"/>
</dbReference>
<dbReference type="InterPro" id="IPR022861">
    <property type="entry name" value="Gln_tRNA_ligase_bac"/>
</dbReference>
<dbReference type="InterPro" id="IPR000924">
    <property type="entry name" value="Glu/Gln-tRNA-synth"/>
</dbReference>
<dbReference type="InterPro" id="IPR020058">
    <property type="entry name" value="Glu/Gln-tRNA-synth_Ib_cat-dom"/>
</dbReference>
<dbReference type="InterPro" id="IPR020059">
    <property type="entry name" value="Glu/Gln-tRNA-synth_Ib_codon-bd"/>
</dbReference>
<dbReference type="InterPro" id="IPR020061">
    <property type="entry name" value="Glu_tRNA_lig_a-bdl"/>
</dbReference>
<dbReference type="InterPro" id="IPR020056">
    <property type="entry name" value="Rbsml_bL25/Gln-tRNA_synth_N"/>
</dbReference>
<dbReference type="InterPro" id="IPR011035">
    <property type="entry name" value="Ribosomal_bL25/Gln-tRNA_synth"/>
</dbReference>
<dbReference type="InterPro" id="IPR014729">
    <property type="entry name" value="Rossmann-like_a/b/a_fold"/>
</dbReference>
<dbReference type="InterPro" id="IPR049437">
    <property type="entry name" value="tRNA-synt_1c_C2"/>
</dbReference>
<dbReference type="NCBIfam" id="TIGR00440">
    <property type="entry name" value="glnS"/>
    <property type="match status" value="1"/>
</dbReference>
<dbReference type="NCBIfam" id="NF011291">
    <property type="entry name" value="PRK14703.1"/>
    <property type="match status" value="1"/>
</dbReference>
<dbReference type="PANTHER" id="PTHR43097:SF5">
    <property type="entry name" value="GLUTAMATE--TRNA LIGASE"/>
    <property type="match status" value="1"/>
</dbReference>
<dbReference type="PANTHER" id="PTHR43097">
    <property type="entry name" value="GLUTAMINE-TRNA LIGASE"/>
    <property type="match status" value="1"/>
</dbReference>
<dbReference type="Pfam" id="PF00749">
    <property type="entry name" value="tRNA-synt_1c"/>
    <property type="match status" value="1"/>
</dbReference>
<dbReference type="Pfam" id="PF03950">
    <property type="entry name" value="tRNA-synt_1c_C"/>
    <property type="match status" value="1"/>
</dbReference>
<dbReference type="Pfam" id="PF20974">
    <property type="entry name" value="tRNA-synt_1c_C2"/>
    <property type="match status" value="1"/>
</dbReference>
<dbReference type="PRINTS" id="PR00987">
    <property type="entry name" value="TRNASYNTHGLU"/>
</dbReference>
<dbReference type="SUPFAM" id="SSF52374">
    <property type="entry name" value="Nucleotidylyl transferase"/>
    <property type="match status" value="1"/>
</dbReference>
<dbReference type="SUPFAM" id="SSF50715">
    <property type="entry name" value="Ribosomal protein L25-like"/>
    <property type="match status" value="1"/>
</dbReference>
<dbReference type="PROSITE" id="PS00178">
    <property type="entry name" value="AA_TRNA_LIGASE_I"/>
    <property type="match status" value="1"/>
</dbReference>
<comment type="catalytic activity">
    <reaction evidence="1">
        <text>tRNA(Gln) + L-glutamine + ATP = L-glutaminyl-tRNA(Gln) + AMP + diphosphate</text>
        <dbReference type="Rhea" id="RHEA:20121"/>
        <dbReference type="Rhea" id="RHEA-COMP:9662"/>
        <dbReference type="Rhea" id="RHEA-COMP:9681"/>
        <dbReference type="ChEBI" id="CHEBI:30616"/>
        <dbReference type="ChEBI" id="CHEBI:33019"/>
        <dbReference type="ChEBI" id="CHEBI:58359"/>
        <dbReference type="ChEBI" id="CHEBI:78442"/>
        <dbReference type="ChEBI" id="CHEBI:78521"/>
        <dbReference type="ChEBI" id="CHEBI:456215"/>
        <dbReference type="EC" id="6.1.1.18"/>
    </reaction>
</comment>
<comment type="subunit">
    <text evidence="1">Monomer.</text>
</comment>
<comment type="subcellular location">
    <subcellularLocation>
        <location evidence="1">Cytoplasm</location>
    </subcellularLocation>
</comment>
<comment type="similarity">
    <text evidence="1">Belongs to the class-I aminoacyl-tRNA synthetase family.</text>
</comment>
<evidence type="ECO:0000255" key="1">
    <source>
        <dbReference type="HAMAP-Rule" id="MF_00126"/>
    </source>
</evidence>
<sequence>MSEETLTTEVETRTNFITHIIDEDLASGKHNNVYTRFPPEPNGYLHIGHAKSICLNFGIAQEYHGKCNLRFDDTNPVKEDIEYVASIKQDVEWLGFKWQGEPRYASDYFDQLHGYAIELIEKGLAYVDELSPEEMREYRGTLTEAGKNSPYRDRSIAENLALFEKMKNGEFKEGTACLRAKIDMASPFIVMRDPVLYRVKFAHHHQTGDKWCIYPMYDFTHCISDAIERITHSLCTLEFQDNRRLYDWVLENISIERPLPHQYEFSRLNLEGTLTSKRKLLQLVTDGIVDGWNDPRMPTISGLRRRGYTPASLREFCRRIGVTKQDNVVEYAALEACIREDLNENAPRAMAVINPVRVVIENVAEPEILKAPNHPNRPELGERDLPFTREIYIDEADFREEANKQYKRLVLGKEVRLRNAYVIKAERVEKDASGKITTIFCSYDPETLGKNPADGRKVKGVIHWVSATQNKVAEFRIYNRLFNVANPGDEEDINAVINPSSLIVKHGFVEVNLANAQKEQGYQFEREGYYCLDSKEGSADNLIFNLTVSLKEGFTA</sequence>
<organism>
    <name type="scientific">Haemophilus ducreyi (strain 35000HP / ATCC 700724)</name>
    <dbReference type="NCBI Taxonomy" id="233412"/>
    <lineage>
        <taxon>Bacteria</taxon>
        <taxon>Pseudomonadati</taxon>
        <taxon>Pseudomonadota</taxon>
        <taxon>Gammaproteobacteria</taxon>
        <taxon>Pasteurellales</taxon>
        <taxon>Pasteurellaceae</taxon>
        <taxon>Haemophilus</taxon>
    </lineage>
</organism>
<keyword id="KW-0030">Aminoacyl-tRNA synthetase</keyword>
<keyword id="KW-0067">ATP-binding</keyword>
<keyword id="KW-0963">Cytoplasm</keyword>
<keyword id="KW-0436">Ligase</keyword>
<keyword id="KW-0547">Nucleotide-binding</keyword>
<keyword id="KW-0648">Protein biosynthesis</keyword>
<keyword id="KW-1185">Reference proteome</keyword>
<feature type="chain" id="PRO_0000195836" description="Glutamine--tRNA ligase">
    <location>
        <begin position="1"/>
        <end position="556"/>
    </location>
</feature>
<feature type="short sequence motif" description="'HIGH' region" evidence="1">
    <location>
        <begin position="39"/>
        <end position="49"/>
    </location>
</feature>
<feature type="short sequence motif" description="'KMSKS' region" evidence="1">
    <location>
        <begin position="274"/>
        <end position="278"/>
    </location>
</feature>
<feature type="binding site" evidence="1">
    <location>
        <begin position="40"/>
        <end position="42"/>
    </location>
    <ligand>
        <name>ATP</name>
        <dbReference type="ChEBI" id="CHEBI:30616"/>
    </ligand>
</feature>
<feature type="binding site" evidence="1">
    <location>
        <begin position="46"/>
        <end position="52"/>
    </location>
    <ligand>
        <name>ATP</name>
        <dbReference type="ChEBI" id="CHEBI:30616"/>
    </ligand>
</feature>
<feature type="binding site" evidence="1">
    <location>
        <position position="72"/>
    </location>
    <ligand>
        <name>L-glutamine</name>
        <dbReference type="ChEBI" id="CHEBI:58359"/>
    </ligand>
</feature>
<feature type="binding site" evidence="1">
    <location>
        <position position="217"/>
    </location>
    <ligand>
        <name>L-glutamine</name>
        <dbReference type="ChEBI" id="CHEBI:58359"/>
    </ligand>
</feature>
<feature type="binding site" evidence="1">
    <location>
        <position position="236"/>
    </location>
    <ligand>
        <name>ATP</name>
        <dbReference type="ChEBI" id="CHEBI:30616"/>
    </ligand>
</feature>
<feature type="binding site" evidence="1">
    <location>
        <begin position="267"/>
        <end position="268"/>
    </location>
    <ligand>
        <name>ATP</name>
        <dbReference type="ChEBI" id="CHEBI:30616"/>
    </ligand>
</feature>
<proteinExistence type="inferred from homology"/>
<accession>Q7VLM3</accession>
<protein>
    <recommendedName>
        <fullName evidence="1">Glutamine--tRNA ligase</fullName>
        <ecNumber evidence="1">6.1.1.18</ecNumber>
    </recommendedName>
    <alternativeName>
        <fullName evidence="1">Glutaminyl-tRNA synthetase</fullName>
        <shortName evidence="1">GlnRS</shortName>
    </alternativeName>
</protein>
<gene>
    <name evidence="1" type="primary">glnS</name>
    <name type="ordered locus">HD_1404</name>
</gene>